<gene>
    <name evidence="1" type="primary">rplB</name>
    <name type="ordered locus">BAA_0129</name>
</gene>
<name>RL2_BACAA</name>
<protein>
    <recommendedName>
        <fullName evidence="1">Large ribosomal subunit protein uL2</fullName>
    </recommendedName>
    <alternativeName>
        <fullName evidence="3">50S ribosomal protein L2</fullName>
    </alternativeName>
</protein>
<comment type="function">
    <text evidence="1">One of the primary rRNA binding proteins. Required for association of the 30S and 50S subunits to form the 70S ribosome, for tRNA binding and peptide bond formation. It has been suggested to have peptidyltransferase activity; this is somewhat controversial. Makes several contacts with the 16S rRNA in the 70S ribosome.</text>
</comment>
<comment type="subunit">
    <text evidence="1">Part of the 50S ribosomal subunit. Forms a bridge to the 30S subunit in the 70S ribosome.</text>
</comment>
<comment type="similarity">
    <text evidence="1">Belongs to the universal ribosomal protein uL2 family.</text>
</comment>
<sequence length="276" mass="30253">MGIKKYNPTTNGRRNMTTNDFAEITTDRPEKSLLAPLSKKAGRNNQGKITVRHQGGGHKRQYRIIDFKRNKDGIPGRVATIEYDPNRSANIALINYVDGEKRYILAPKNLEVGMEIMSGAEADIKIGNALPLINIPVGTVVHNIELKPGRGGQLVRSAGTSAQVLGKEGKYVLVRLTSGEVRLVLSACRATVGQVGNESHELIKIGKAGRSRWLGKRPTVRGSVMNPVDHPHGGGEGRSPIGRKSPMSPWGKPTLGFKTRKKNKASDKFIVRRRKK</sequence>
<organism>
    <name type="scientific">Bacillus anthracis (strain A0248)</name>
    <dbReference type="NCBI Taxonomy" id="592021"/>
    <lineage>
        <taxon>Bacteria</taxon>
        <taxon>Bacillati</taxon>
        <taxon>Bacillota</taxon>
        <taxon>Bacilli</taxon>
        <taxon>Bacillales</taxon>
        <taxon>Bacillaceae</taxon>
        <taxon>Bacillus</taxon>
        <taxon>Bacillus cereus group</taxon>
    </lineage>
</organism>
<proteinExistence type="inferred from homology"/>
<accession>C3P9Q8</accession>
<dbReference type="EMBL" id="CP001598">
    <property type="protein sequence ID" value="ACQ48642.1"/>
    <property type="molecule type" value="Genomic_DNA"/>
</dbReference>
<dbReference type="RefSeq" id="WP_000511580.1">
    <property type="nucleotide sequence ID" value="NC_012659.1"/>
</dbReference>
<dbReference type="SMR" id="C3P9Q8"/>
<dbReference type="GeneID" id="93010940"/>
<dbReference type="KEGG" id="bai:BAA_0129"/>
<dbReference type="HOGENOM" id="CLU_036235_2_1_9"/>
<dbReference type="GO" id="GO:0015934">
    <property type="term" value="C:large ribosomal subunit"/>
    <property type="evidence" value="ECO:0007669"/>
    <property type="project" value="InterPro"/>
</dbReference>
<dbReference type="GO" id="GO:0019843">
    <property type="term" value="F:rRNA binding"/>
    <property type="evidence" value="ECO:0007669"/>
    <property type="project" value="UniProtKB-UniRule"/>
</dbReference>
<dbReference type="GO" id="GO:0003735">
    <property type="term" value="F:structural constituent of ribosome"/>
    <property type="evidence" value="ECO:0007669"/>
    <property type="project" value="InterPro"/>
</dbReference>
<dbReference type="GO" id="GO:0016740">
    <property type="term" value="F:transferase activity"/>
    <property type="evidence" value="ECO:0007669"/>
    <property type="project" value="InterPro"/>
</dbReference>
<dbReference type="GO" id="GO:0002181">
    <property type="term" value="P:cytoplasmic translation"/>
    <property type="evidence" value="ECO:0007669"/>
    <property type="project" value="TreeGrafter"/>
</dbReference>
<dbReference type="FunFam" id="2.30.30.30:FF:000001">
    <property type="entry name" value="50S ribosomal protein L2"/>
    <property type="match status" value="1"/>
</dbReference>
<dbReference type="FunFam" id="2.40.50.140:FF:000003">
    <property type="entry name" value="50S ribosomal protein L2"/>
    <property type="match status" value="1"/>
</dbReference>
<dbReference type="FunFam" id="4.10.950.10:FF:000001">
    <property type="entry name" value="50S ribosomal protein L2"/>
    <property type="match status" value="1"/>
</dbReference>
<dbReference type="Gene3D" id="2.30.30.30">
    <property type="match status" value="1"/>
</dbReference>
<dbReference type="Gene3D" id="2.40.50.140">
    <property type="entry name" value="Nucleic acid-binding proteins"/>
    <property type="match status" value="1"/>
</dbReference>
<dbReference type="Gene3D" id="4.10.950.10">
    <property type="entry name" value="Ribosomal protein L2, domain 3"/>
    <property type="match status" value="1"/>
</dbReference>
<dbReference type="HAMAP" id="MF_01320_B">
    <property type="entry name" value="Ribosomal_uL2_B"/>
    <property type="match status" value="1"/>
</dbReference>
<dbReference type="InterPro" id="IPR012340">
    <property type="entry name" value="NA-bd_OB-fold"/>
</dbReference>
<dbReference type="InterPro" id="IPR014722">
    <property type="entry name" value="Rib_uL2_dom2"/>
</dbReference>
<dbReference type="InterPro" id="IPR002171">
    <property type="entry name" value="Ribosomal_uL2"/>
</dbReference>
<dbReference type="InterPro" id="IPR005880">
    <property type="entry name" value="Ribosomal_uL2_bac/org-type"/>
</dbReference>
<dbReference type="InterPro" id="IPR022669">
    <property type="entry name" value="Ribosomal_uL2_C"/>
</dbReference>
<dbReference type="InterPro" id="IPR022671">
    <property type="entry name" value="Ribosomal_uL2_CS"/>
</dbReference>
<dbReference type="InterPro" id="IPR014726">
    <property type="entry name" value="Ribosomal_uL2_dom3"/>
</dbReference>
<dbReference type="InterPro" id="IPR022666">
    <property type="entry name" value="Ribosomal_uL2_RNA-bd_dom"/>
</dbReference>
<dbReference type="InterPro" id="IPR008991">
    <property type="entry name" value="Translation_prot_SH3-like_sf"/>
</dbReference>
<dbReference type="NCBIfam" id="TIGR01171">
    <property type="entry name" value="rplB_bact"/>
    <property type="match status" value="1"/>
</dbReference>
<dbReference type="PANTHER" id="PTHR13691:SF5">
    <property type="entry name" value="LARGE RIBOSOMAL SUBUNIT PROTEIN UL2M"/>
    <property type="match status" value="1"/>
</dbReference>
<dbReference type="PANTHER" id="PTHR13691">
    <property type="entry name" value="RIBOSOMAL PROTEIN L2"/>
    <property type="match status" value="1"/>
</dbReference>
<dbReference type="Pfam" id="PF00181">
    <property type="entry name" value="Ribosomal_L2"/>
    <property type="match status" value="1"/>
</dbReference>
<dbReference type="Pfam" id="PF03947">
    <property type="entry name" value="Ribosomal_L2_C"/>
    <property type="match status" value="1"/>
</dbReference>
<dbReference type="PIRSF" id="PIRSF002158">
    <property type="entry name" value="Ribosomal_L2"/>
    <property type="match status" value="1"/>
</dbReference>
<dbReference type="SMART" id="SM01383">
    <property type="entry name" value="Ribosomal_L2"/>
    <property type="match status" value="1"/>
</dbReference>
<dbReference type="SMART" id="SM01382">
    <property type="entry name" value="Ribosomal_L2_C"/>
    <property type="match status" value="1"/>
</dbReference>
<dbReference type="SUPFAM" id="SSF50249">
    <property type="entry name" value="Nucleic acid-binding proteins"/>
    <property type="match status" value="1"/>
</dbReference>
<dbReference type="SUPFAM" id="SSF50104">
    <property type="entry name" value="Translation proteins SH3-like domain"/>
    <property type="match status" value="1"/>
</dbReference>
<dbReference type="PROSITE" id="PS00467">
    <property type="entry name" value="RIBOSOMAL_L2"/>
    <property type="match status" value="1"/>
</dbReference>
<keyword id="KW-0687">Ribonucleoprotein</keyword>
<keyword id="KW-0689">Ribosomal protein</keyword>
<keyword id="KW-0694">RNA-binding</keyword>
<keyword id="KW-0699">rRNA-binding</keyword>
<feature type="chain" id="PRO_1000165719" description="Large ribosomal subunit protein uL2">
    <location>
        <begin position="1"/>
        <end position="276"/>
    </location>
</feature>
<feature type="region of interest" description="Disordered" evidence="2">
    <location>
        <begin position="1"/>
        <end position="20"/>
    </location>
</feature>
<feature type="region of interest" description="Disordered" evidence="2">
    <location>
        <begin position="219"/>
        <end position="276"/>
    </location>
</feature>
<feature type="compositionally biased region" description="Polar residues" evidence="2">
    <location>
        <begin position="7"/>
        <end position="20"/>
    </location>
</feature>
<reference key="1">
    <citation type="submission" date="2009-04" db="EMBL/GenBank/DDBJ databases">
        <title>Genome sequence of Bacillus anthracis A0248.</title>
        <authorList>
            <person name="Dodson R.J."/>
            <person name="Munk A.C."/>
            <person name="Bruce D."/>
            <person name="Detter C."/>
            <person name="Tapia R."/>
            <person name="Sutton G."/>
            <person name="Sims D."/>
            <person name="Brettin T."/>
        </authorList>
    </citation>
    <scope>NUCLEOTIDE SEQUENCE [LARGE SCALE GENOMIC DNA]</scope>
    <source>
        <strain>A0248</strain>
    </source>
</reference>
<evidence type="ECO:0000255" key="1">
    <source>
        <dbReference type="HAMAP-Rule" id="MF_01320"/>
    </source>
</evidence>
<evidence type="ECO:0000256" key="2">
    <source>
        <dbReference type="SAM" id="MobiDB-lite"/>
    </source>
</evidence>
<evidence type="ECO:0000305" key="3"/>